<reference key="1">
    <citation type="submission" date="2006-02" db="EMBL/GenBank/DDBJ databases">
        <title>Sweet receptor gene variation and aspartame blindness in both primates and non-primates.</title>
        <authorList>
            <person name="Li X."/>
            <person name="Wong E.W."/>
            <person name="Li W."/>
            <person name="Lim R."/>
            <person name="Mascioli K.J."/>
            <person name="Maehashi K."/>
            <person name="Bachmanov A.A."/>
            <person name="Tordoff M.G."/>
            <person name="Beauchamp G.K."/>
            <person name="Reed D.R."/>
        </authorList>
    </citation>
    <scope>NUCLEOTIDE SEQUENCE [GENOMIC DNA]</scope>
</reference>
<name>TS1R2_SAISC</name>
<protein>
    <recommendedName>
        <fullName>Taste receptor type 1 member 2</fullName>
    </recommendedName>
    <alternativeName>
        <fullName>Sweet taste receptor T1R2</fullName>
    </alternativeName>
</protein>
<organism>
    <name type="scientific">Saimiri sciureus</name>
    <name type="common">Common squirrel monkey</name>
    <dbReference type="NCBI Taxonomy" id="9521"/>
    <lineage>
        <taxon>Eukaryota</taxon>
        <taxon>Metazoa</taxon>
        <taxon>Chordata</taxon>
        <taxon>Craniata</taxon>
        <taxon>Vertebrata</taxon>
        <taxon>Euteleostomi</taxon>
        <taxon>Mammalia</taxon>
        <taxon>Eutheria</taxon>
        <taxon>Euarchontoglires</taxon>
        <taxon>Primates</taxon>
        <taxon>Haplorrhini</taxon>
        <taxon>Platyrrhini</taxon>
        <taxon>Cebidae</taxon>
        <taxon>Saimiriinae</taxon>
        <taxon>Saimiri</taxon>
    </lineage>
</organism>
<gene>
    <name type="primary">TAS1R2</name>
</gene>
<evidence type="ECO:0000250" key="1"/>
<evidence type="ECO:0000255" key="2"/>
<evidence type="ECO:0000305" key="3"/>
<feature type="signal peptide" evidence="2">
    <location>
        <begin position="1"/>
        <end position="19"/>
    </location>
</feature>
<feature type="chain" id="PRO_0000285556" description="Taste receptor type 1 member 2">
    <location>
        <begin position="20"/>
        <end position="834"/>
    </location>
</feature>
<feature type="topological domain" description="Extracellular" evidence="2">
    <location>
        <begin position="20"/>
        <end position="561"/>
    </location>
</feature>
<feature type="transmembrane region" description="Helical; Name=1" evidence="2">
    <location>
        <begin position="562"/>
        <end position="582"/>
    </location>
</feature>
<feature type="topological domain" description="Cytoplasmic" evidence="2">
    <location>
        <begin position="583"/>
        <end position="597"/>
    </location>
</feature>
<feature type="transmembrane region" description="Helical; Name=2" evidence="2">
    <location>
        <begin position="598"/>
        <end position="618"/>
    </location>
</feature>
<feature type="topological domain" description="Extracellular" evidence="2">
    <location>
        <begin position="619"/>
        <end position="630"/>
    </location>
</feature>
<feature type="transmembrane region" description="Helical; Name=3" evidence="2">
    <location>
        <begin position="631"/>
        <end position="651"/>
    </location>
</feature>
<feature type="topological domain" description="Cytoplasmic" evidence="2">
    <location>
        <begin position="652"/>
        <end position="676"/>
    </location>
</feature>
<feature type="transmembrane region" description="Helical; Name=4" evidence="2">
    <location>
        <begin position="677"/>
        <end position="697"/>
    </location>
</feature>
<feature type="topological domain" description="Extracellular" evidence="2">
    <location>
        <begin position="698"/>
        <end position="722"/>
    </location>
</feature>
<feature type="transmembrane region" description="Helical; Name=5" evidence="2">
    <location>
        <begin position="723"/>
        <end position="743"/>
    </location>
</feature>
<feature type="topological domain" description="Cytoplasmic" evidence="2">
    <location>
        <begin position="744"/>
        <end position="755"/>
    </location>
</feature>
<feature type="transmembrane region" description="Helical; Name=6" evidence="2">
    <location>
        <begin position="756"/>
        <end position="776"/>
    </location>
</feature>
<feature type="topological domain" description="Extracellular" evidence="2">
    <location>
        <begin position="777"/>
        <end position="779"/>
    </location>
</feature>
<feature type="transmembrane region" description="Helical; Name=7" evidence="2">
    <location>
        <begin position="780"/>
        <end position="800"/>
    </location>
</feature>
<feature type="topological domain" description="Cytoplasmic" evidence="2">
    <location>
        <begin position="801"/>
        <end position="834"/>
    </location>
</feature>
<feature type="glycosylation site" description="N-linked (GlcNAc...) asparagine" evidence="2">
    <location>
        <position position="84"/>
    </location>
</feature>
<feature type="glycosylation site" description="N-linked (GlcNAc...) asparagine" evidence="2">
    <location>
        <position position="292"/>
    </location>
</feature>
<feature type="glycosylation site" description="N-linked (GlcNAc...) asparagine" evidence="2">
    <location>
        <position position="312"/>
    </location>
</feature>
<feature type="glycosylation site" description="N-linked (GlcNAc...) asparagine" evidence="2">
    <location>
        <position position="363"/>
    </location>
</feature>
<feature type="glycosylation site" description="N-linked (GlcNAc...) asparagine" evidence="2">
    <location>
        <position position="423"/>
    </location>
</feature>
<feature type="glycosylation site" description="N-linked (GlcNAc...) asparagine" evidence="2">
    <location>
        <position position="482"/>
    </location>
</feature>
<feature type="glycosylation site" description="N-linked (GlcNAc...) asparagine" evidence="2">
    <location>
        <position position="522"/>
    </location>
</feature>
<dbReference type="EMBL" id="DQ386301">
    <property type="protein sequence ID" value="ABD37685.1"/>
    <property type="molecule type" value="Genomic_DNA"/>
</dbReference>
<dbReference type="SMR" id="A3QP08"/>
<dbReference type="GlyCosmos" id="A3QP08">
    <property type="glycosylation" value="7 sites, No reported glycans"/>
</dbReference>
<dbReference type="GO" id="GO:0005886">
    <property type="term" value="C:plasma membrane"/>
    <property type="evidence" value="ECO:0007669"/>
    <property type="project" value="UniProtKB-SubCell"/>
</dbReference>
<dbReference type="GO" id="GO:1903767">
    <property type="term" value="C:sweet taste receptor complex"/>
    <property type="evidence" value="ECO:0007669"/>
    <property type="project" value="TreeGrafter"/>
</dbReference>
<dbReference type="GO" id="GO:0004930">
    <property type="term" value="F:G protein-coupled receptor activity"/>
    <property type="evidence" value="ECO:0007669"/>
    <property type="project" value="UniProtKB-KW"/>
</dbReference>
<dbReference type="GO" id="GO:0033041">
    <property type="term" value="F:sweet taste receptor activity"/>
    <property type="evidence" value="ECO:0007669"/>
    <property type="project" value="TreeGrafter"/>
</dbReference>
<dbReference type="CDD" id="cd15288">
    <property type="entry name" value="7tmC_TAS1R2"/>
    <property type="match status" value="1"/>
</dbReference>
<dbReference type="FunFam" id="3.40.50.2300:FF:000016">
    <property type="entry name" value="Taste 1 receptor member 2"/>
    <property type="match status" value="1"/>
</dbReference>
<dbReference type="FunFam" id="2.10.50.30:FF:000004">
    <property type="entry name" value="Taste receptor type 1 member 3-like protein"/>
    <property type="match status" value="1"/>
</dbReference>
<dbReference type="Gene3D" id="3.40.50.2300">
    <property type="match status" value="2"/>
</dbReference>
<dbReference type="Gene3D" id="2.10.50.30">
    <property type="entry name" value="GPCR, family 3, nine cysteines domain"/>
    <property type="match status" value="1"/>
</dbReference>
<dbReference type="InterPro" id="IPR001828">
    <property type="entry name" value="ANF_lig-bd_rcpt"/>
</dbReference>
<dbReference type="InterPro" id="IPR000337">
    <property type="entry name" value="GPCR_3"/>
</dbReference>
<dbReference type="InterPro" id="IPR011500">
    <property type="entry name" value="GPCR_3_9-Cys_dom"/>
</dbReference>
<dbReference type="InterPro" id="IPR038550">
    <property type="entry name" value="GPCR_3_9-Cys_sf"/>
</dbReference>
<dbReference type="InterPro" id="IPR017978">
    <property type="entry name" value="GPCR_3_C"/>
</dbReference>
<dbReference type="InterPro" id="IPR000068">
    <property type="entry name" value="GPCR_3_Ca_sens_rcpt-rel"/>
</dbReference>
<dbReference type="InterPro" id="IPR017979">
    <property type="entry name" value="GPCR_3_CS"/>
</dbReference>
<dbReference type="InterPro" id="IPR028082">
    <property type="entry name" value="Peripla_BP_I"/>
</dbReference>
<dbReference type="PANTHER" id="PTHR24061">
    <property type="entry name" value="CALCIUM-SENSING RECEPTOR-RELATED"/>
    <property type="match status" value="1"/>
</dbReference>
<dbReference type="PANTHER" id="PTHR24061:SF517">
    <property type="entry name" value="TASTE RECEPTOR TYPE 1 MEMBER 2"/>
    <property type="match status" value="1"/>
</dbReference>
<dbReference type="Pfam" id="PF00003">
    <property type="entry name" value="7tm_3"/>
    <property type="match status" value="1"/>
</dbReference>
<dbReference type="Pfam" id="PF01094">
    <property type="entry name" value="ANF_receptor"/>
    <property type="match status" value="1"/>
</dbReference>
<dbReference type="Pfam" id="PF07562">
    <property type="entry name" value="NCD3G"/>
    <property type="match status" value="1"/>
</dbReference>
<dbReference type="PRINTS" id="PR00592">
    <property type="entry name" value="CASENSINGR"/>
</dbReference>
<dbReference type="PRINTS" id="PR00248">
    <property type="entry name" value="GPCRMGR"/>
</dbReference>
<dbReference type="SUPFAM" id="SSF53822">
    <property type="entry name" value="Periplasmic binding protein-like I"/>
    <property type="match status" value="1"/>
</dbReference>
<dbReference type="SUPFAM" id="SSF57586">
    <property type="entry name" value="TNF receptor-like"/>
    <property type="match status" value="1"/>
</dbReference>
<dbReference type="PROSITE" id="PS00981">
    <property type="entry name" value="G_PROTEIN_RECEP_F3_3"/>
    <property type="match status" value="1"/>
</dbReference>
<dbReference type="PROSITE" id="PS50259">
    <property type="entry name" value="G_PROTEIN_RECEP_F3_4"/>
    <property type="match status" value="1"/>
</dbReference>
<proteinExistence type="inferred from homology"/>
<keyword id="KW-1003">Cell membrane</keyword>
<keyword id="KW-0297">G-protein coupled receptor</keyword>
<keyword id="KW-0325">Glycoprotein</keyword>
<keyword id="KW-0472">Membrane</keyword>
<keyword id="KW-0675">Receptor</keyword>
<keyword id="KW-0716">Sensory transduction</keyword>
<keyword id="KW-0732">Signal</keyword>
<keyword id="KW-0919">Taste</keyword>
<keyword id="KW-0807">Transducer</keyword>
<keyword id="KW-0812">Transmembrane</keyword>
<keyword id="KW-1133">Transmembrane helix</keyword>
<accession>A3QP08</accession>
<comment type="function">
    <text evidence="1">Putative taste receptor. TAS1R2/TAS1R3 recognizes diverse natural and synthetic sweeteners (By similarity).</text>
</comment>
<comment type="subunit">
    <text evidence="1">Forms heterodimers with TAS1R3.</text>
</comment>
<comment type="subcellular location">
    <subcellularLocation>
        <location evidence="1">Cell membrane</location>
        <topology evidence="1">Multi-pass membrane protein</topology>
    </subcellularLocation>
</comment>
<comment type="similarity">
    <text evidence="3">Belongs to the G-protein coupled receptor 3 family. TAS1R subfamily.</text>
</comment>
<sequence length="834" mass="94378">MEPRVRTVCFLFFLLRVLAEPAKNSDFYLPGDYLLGGLFTLHANMKGTVHLNFLQVPMCKEYEVKLSGYNLMQAMRFAVEEINNDSSLLPDVRLGYEMVDVCYVSNNVQPVLYFLAQEDNLLPIQEDYSNYVPRVVAVIGPENSESVTTVANFLSLFLLPQITYSAISDQLRDKQRFPALLRTTPSAKHHIEAMVQLMLHFRWNWISVLVSSDTYGRDNGQLLGDRLAGGDICIAFQETLPTLQPNQDMMPEDRQRLVSIVEKLQQSTARVVVVFSPDLTLYDFFREVLRQNFTGAVWIASESWAIDPVLHNLTGLHRTGTFLGITLQNVPIPGFNEFRVRGPQAGPTHQRSTCNQECDTCLNSTLSFNTILRLSGERVVYSVYSAVYAVAHALHSLLGCDHSACTKRGVYPWQLLEEIWKVNFSLLDHQIFFDPQGDVALHLEIVQWQWDLSQNPFQSVASYQPLQGHLKDIQDISWHTVNNTIPVSMCSKRCQSGQKKKPVGIHTCCFECIDCPPGTFLNQTANEYDCQACPSNEWSHQSETSCFKRRLSFLEWHEAATIAVALLAALGFLSTLAILVIFWRHFETPMVRSAGGPMCFLMLTLLLVAYMVVPVYVGLPKVSTCLCRQALFPVCFTICISCIAVRSFQIVCVFKMASRFPRAYSYWVRYQGSYVSVAFITALKMVTVVISLLATGLNPTTRTDTDDPKIMIISCNPNYRNSLLFNTSLDLLLSVAGFSFAYMGKELPTNYNEAKFITFSMTFYFTSSVSLCTFMSVYDGVLVTIVDLLVTVFNLLAISLGYFGPKCYMILFYPERNTPAYFNSMIQGYTMRRD</sequence>